<dbReference type="EC" id="3.1.11.6" evidence="1"/>
<dbReference type="EMBL" id="AE017263">
    <property type="protein sequence ID" value="AAT75688.1"/>
    <property type="molecule type" value="Genomic_DNA"/>
</dbReference>
<dbReference type="RefSeq" id="WP_011183228.1">
    <property type="nucleotide sequence ID" value="NC_006055.1"/>
</dbReference>
<dbReference type="RefSeq" id="YP_053572.1">
    <property type="nucleotide sequence ID" value="NC_006055.1"/>
</dbReference>
<dbReference type="SMR" id="Q6F1D5"/>
<dbReference type="STRING" id="265311.Mfl331"/>
<dbReference type="PaxDb" id="265311-Mfl331"/>
<dbReference type="EnsemblBacteria" id="AAT75688">
    <property type="protein sequence ID" value="AAT75688"/>
    <property type="gene ID" value="Mfl331"/>
</dbReference>
<dbReference type="GeneID" id="2898002"/>
<dbReference type="KEGG" id="mfl:Mfl331"/>
<dbReference type="PATRIC" id="fig|265311.5.peg.331"/>
<dbReference type="eggNOG" id="COG1570">
    <property type="taxonomic scope" value="Bacteria"/>
</dbReference>
<dbReference type="HOGENOM" id="CLU_023625_3_1_14"/>
<dbReference type="OrthoDB" id="9802795at2"/>
<dbReference type="Proteomes" id="UP000006647">
    <property type="component" value="Chromosome"/>
</dbReference>
<dbReference type="GO" id="GO:0005737">
    <property type="term" value="C:cytoplasm"/>
    <property type="evidence" value="ECO:0007669"/>
    <property type="project" value="UniProtKB-SubCell"/>
</dbReference>
<dbReference type="GO" id="GO:0009318">
    <property type="term" value="C:exodeoxyribonuclease VII complex"/>
    <property type="evidence" value="ECO:0007669"/>
    <property type="project" value="InterPro"/>
</dbReference>
<dbReference type="GO" id="GO:0008855">
    <property type="term" value="F:exodeoxyribonuclease VII activity"/>
    <property type="evidence" value="ECO:0007669"/>
    <property type="project" value="UniProtKB-UniRule"/>
</dbReference>
<dbReference type="GO" id="GO:0003676">
    <property type="term" value="F:nucleic acid binding"/>
    <property type="evidence" value="ECO:0007669"/>
    <property type="project" value="InterPro"/>
</dbReference>
<dbReference type="GO" id="GO:0006308">
    <property type="term" value="P:DNA catabolic process"/>
    <property type="evidence" value="ECO:0007669"/>
    <property type="project" value="UniProtKB-UniRule"/>
</dbReference>
<dbReference type="CDD" id="cd04489">
    <property type="entry name" value="ExoVII_LU_OBF"/>
    <property type="match status" value="1"/>
</dbReference>
<dbReference type="HAMAP" id="MF_00378">
    <property type="entry name" value="Exonuc_7_L"/>
    <property type="match status" value="1"/>
</dbReference>
<dbReference type="InterPro" id="IPR003753">
    <property type="entry name" value="Exonuc_VII_L"/>
</dbReference>
<dbReference type="InterPro" id="IPR020579">
    <property type="entry name" value="Exonuc_VII_lsu_C"/>
</dbReference>
<dbReference type="InterPro" id="IPR025824">
    <property type="entry name" value="OB-fold_nuc-bd_dom"/>
</dbReference>
<dbReference type="NCBIfam" id="TIGR00237">
    <property type="entry name" value="xseA"/>
    <property type="match status" value="1"/>
</dbReference>
<dbReference type="PANTHER" id="PTHR30008">
    <property type="entry name" value="EXODEOXYRIBONUCLEASE 7 LARGE SUBUNIT"/>
    <property type="match status" value="1"/>
</dbReference>
<dbReference type="PANTHER" id="PTHR30008:SF0">
    <property type="entry name" value="EXODEOXYRIBONUCLEASE 7 LARGE SUBUNIT"/>
    <property type="match status" value="1"/>
</dbReference>
<dbReference type="Pfam" id="PF02601">
    <property type="entry name" value="Exonuc_VII_L"/>
    <property type="match status" value="2"/>
</dbReference>
<dbReference type="Pfam" id="PF13742">
    <property type="entry name" value="tRNA_anti_2"/>
    <property type="match status" value="1"/>
</dbReference>
<gene>
    <name evidence="1" type="primary">xseA</name>
    <name type="ordered locus">Mfl331</name>
</gene>
<sequence>MENKIFSVAEISQIFKEAIEGSNYFKNIYVRGEVGNLTFNKSGHVYFSLKDNQSTIAAMIWKSNAHKLTNLNVKEGMEITCYGRLTYYVPSGRVSFEAVDVSVEGKGDLQEIFEERLKEITALGWTDESRKKPINRFAKNIGLITTDSGAAIKDLITTLKRRMPSVNIYLFPTMVQGETAKFDIANKIQQANLFEPKLDILIVGRGGGSYEDLWTFNEMKVLKAIVDSSIPVISAVGHEPDITLSDYVADLRAATPTAAAELASISTEELLKELAYNYENQIRLFKNVYNNQQLKIEEFKKQNILKINNKYDLQSLDLNYIEKSFINNINNIISRNEMFIENIESKTALLDPKKPLDKGFGLIMSKDKQIINSVDKVDINQEIKLVLKDGEIETIIKGVKKHGK</sequence>
<proteinExistence type="inferred from homology"/>
<protein>
    <recommendedName>
        <fullName evidence="1">Exodeoxyribonuclease 7 large subunit</fullName>
        <ecNumber evidence="1">3.1.11.6</ecNumber>
    </recommendedName>
    <alternativeName>
        <fullName evidence="1">Exodeoxyribonuclease VII large subunit</fullName>
        <shortName evidence="1">Exonuclease VII large subunit</shortName>
    </alternativeName>
</protein>
<evidence type="ECO:0000255" key="1">
    <source>
        <dbReference type="HAMAP-Rule" id="MF_00378"/>
    </source>
</evidence>
<organism>
    <name type="scientific">Mesoplasma florum (strain ATCC 33453 / NBRC 100688 / NCTC 11704 / L1)</name>
    <name type="common">Acholeplasma florum</name>
    <dbReference type="NCBI Taxonomy" id="265311"/>
    <lineage>
        <taxon>Bacteria</taxon>
        <taxon>Bacillati</taxon>
        <taxon>Mycoplasmatota</taxon>
        <taxon>Mollicutes</taxon>
        <taxon>Entomoplasmatales</taxon>
        <taxon>Entomoplasmataceae</taxon>
        <taxon>Mesoplasma</taxon>
    </lineage>
</organism>
<feature type="chain" id="PRO_0000303798" description="Exodeoxyribonuclease 7 large subunit">
    <location>
        <begin position="1"/>
        <end position="404"/>
    </location>
</feature>
<accession>Q6F1D5</accession>
<keyword id="KW-0963">Cytoplasm</keyword>
<keyword id="KW-0269">Exonuclease</keyword>
<keyword id="KW-0378">Hydrolase</keyword>
<keyword id="KW-0540">Nuclease</keyword>
<keyword id="KW-1185">Reference proteome</keyword>
<reference key="1">
    <citation type="submission" date="2004-06" db="EMBL/GenBank/DDBJ databases">
        <authorList>
            <person name="Birren B.W."/>
            <person name="Stange-Thomann N."/>
            <person name="Hafez N."/>
            <person name="DeCaprio D."/>
            <person name="Fisher S."/>
            <person name="Butler J."/>
            <person name="Elkins T."/>
            <person name="Kodira C.D."/>
            <person name="Major J."/>
            <person name="Wang S."/>
            <person name="Nicol R."/>
            <person name="Nusbaum C."/>
        </authorList>
    </citation>
    <scope>NUCLEOTIDE SEQUENCE [LARGE SCALE GENOMIC DNA]</scope>
    <source>
        <strain>ATCC 33453 / NBRC 100688 / NCTC 11704 / L1</strain>
    </source>
</reference>
<name>EX7L_MESFL</name>
<comment type="function">
    <text evidence="1">Bidirectionally degrades single-stranded DNA into large acid-insoluble oligonucleotides, which are then degraded further into small acid-soluble oligonucleotides.</text>
</comment>
<comment type="catalytic activity">
    <reaction evidence="1">
        <text>Exonucleolytic cleavage in either 5'- to 3'- or 3'- to 5'-direction to yield nucleoside 5'-phosphates.</text>
        <dbReference type="EC" id="3.1.11.6"/>
    </reaction>
</comment>
<comment type="subunit">
    <text evidence="1">Heterooligomer composed of large and small subunits.</text>
</comment>
<comment type="subcellular location">
    <subcellularLocation>
        <location evidence="1">Cytoplasm</location>
    </subcellularLocation>
</comment>
<comment type="similarity">
    <text evidence="1">Belongs to the XseA family.</text>
</comment>